<name>LACG_STAHJ</name>
<organism>
    <name type="scientific">Staphylococcus haemolyticus (strain JCSC1435)</name>
    <dbReference type="NCBI Taxonomy" id="279808"/>
    <lineage>
        <taxon>Bacteria</taxon>
        <taxon>Bacillati</taxon>
        <taxon>Bacillota</taxon>
        <taxon>Bacilli</taxon>
        <taxon>Bacillales</taxon>
        <taxon>Staphylococcaceae</taxon>
        <taxon>Staphylococcus</taxon>
    </lineage>
</organism>
<protein>
    <recommendedName>
        <fullName evidence="1">6-phospho-beta-galactosidase</fullName>
        <ecNumber evidence="1">3.2.1.85</ecNumber>
    </recommendedName>
    <alternativeName>
        <fullName evidence="1">Beta-D-phosphogalactoside galactohydrolase</fullName>
        <shortName evidence="1">PGALase</shortName>
    </alternativeName>
    <alternativeName>
        <fullName evidence="1">P-beta-Gal</fullName>
        <shortName evidence="1">PBG</shortName>
    </alternativeName>
</protein>
<proteinExistence type="inferred from homology"/>
<keyword id="KW-0326">Glycosidase</keyword>
<keyword id="KW-0378">Hydrolase</keyword>
<reference key="1">
    <citation type="journal article" date="2005" name="J. Bacteriol.">
        <title>Whole-genome sequencing of Staphylococcus haemolyticus uncovers the extreme plasticity of its genome and the evolution of human-colonizing staphylococcal species.</title>
        <authorList>
            <person name="Takeuchi F."/>
            <person name="Watanabe S."/>
            <person name="Baba T."/>
            <person name="Yuzawa H."/>
            <person name="Ito T."/>
            <person name="Morimoto Y."/>
            <person name="Kuroda M."/>
            <person name="Cui L."/>
            <person name="Takahashi M."/>
            <person name="Ankai A."/>
            <person name="Baba S."/>
            <person name="Fukui S."/>
            <person name="Lee J.C."/>
            <person name="Hiramatsu K."/>
        </authorList>
    </citation>
    <scope>NUCLEOTIDE SEQUENCE [LARGE SCALE GENOMIC DNA]</scope>
    <source>
        <strain>JCSC1435</strain>
    </source>
</reference>
<dbReference type="EC" id="3.2.1.85" evidence="1"/>
<dbReference type="EMBL" id="AP006716">
    <property type="protein sequence ID" value="BAE04157.1"/>
    <property type="molecule type" value="Genomic_DNA"/>
</dbReference>
<dbReference type="SMR" id="Q4L868"/>
<dbReference type="CAZy" id="GH1">
    <property type="family name" value="Glycoside Hydrolase Family 1"/>
</dbReference>
<dbReference type="KEGG" id="sha:SH0848"/>
<dbReference type="eggNOG" id="COG2723">
    <property type="taxonomic scope" value="Bacteria"/>
</dbReference>
<dbReference type="HOGENOM" id="CLU_001859_1_3_9"/>
<dbReference type="UniPathway" id="UPA00542">
    <property type="reaction ID" value="UER00605"/>
</dbReference>
<dbReference type="Proteomes" id="UP000000543">
    <property type="component" value="Chromosome"/>
</dbReference>
<dbReference type="GO" id="GO:0005829">
    <property type="term" value="C:cytosol"/>
    <property type="evidence" value="ECO:0007669"/>
    <property type="project" value="TreeGrafter"/>
</dbReference>
<dbReference type="GO" id="GO:0033920">
    <property type="term" value="F:6-phospho-beta-galactosidase activity"/>
    <property type="evidence" value="ECO:0007669"/>
    <property type="project" value="UniProtKB-UniRule"/>
</dbReference>
<dbReference type="GO" id="GO:0008422">
    <property type="term" value="F:beta-glucosidase activity"/>
    <property type="evidence" value="ECO:0007669"/>
    <property type="project" value="TreeGrafter"/>
</dbReference>
<dbReference type="GO" id="GO:0019512">
    <property type="term" value="P:lactose catabolic process via tagatose-6-phosphate"/>
    <property type="evidence" value="ECO:0007669"/>
    <property type="project" value="InterPro"/>
</dbReference>
<dbReference type="FunFam" id="3.20.20.80:FF:000004">
    <property type="entry name" value="Beta-glucosidase 6-phospho-beta-glucosidase"/>
    <property type="match status" value="1"/>
</dbReference>
<dbReference type="Gene3D" id="3.20.20.80">
    <property type="entry name" value="Glycosidases"/>
    <property type="match status" value="1"/>
</dbReference>
<dbReference type="HAMAP" id="MF_01574">
    <property type="entry name" value="LacG"/>
    <property type="match status" value="1"/>
</dbReference>
<dbReference type="InterPro" id="IPR005928">
    <property type="entry name" value="6P-beta-galactosidase"/>
</dbReference>
<dbReference type="InterPro" id="IPR001360">
    <property type="entry name" value="Glyco_hydro_1"/>
</dbReference>
<dbReference type="InterPro" id="IPR018120">
    <property type="entry name" value="Glyco_hydro_1_AS"/>
</dbReference>
<dbReference type="InterPro" id="IPR033132">
    <property type="entry name" value="Glyco_hydro_1_N_CS"/>
</dbReference>
<dbReference type="InterPro" id="IPR017853">
    <property type="entry name" value="Glycoside_hydrolase_SF"/>
</dbReference>
<dbReference type="NCBIfam" id="TIGR01233">
    <property type="entry name" value="lacG"/>
    <property type="match status" value="1"/>
</dbReference>
<dbReference type="NCBIfam" id="NF010036">
    <property type="entry name" value="PRK13511.1"/>
    <property type="match status" value="1"/>
</dbReference>
<dbReference type="PANTHER" id="PTHR10353">
    <property type="entry name" value="GLYCOSYL HYDROLASE"/>
    <property type="match status" value="1"/>
</dbReference>
<dbReference type="PANTHER" id="PTHR10353:SF36">
    <property type="entry name" value="LP05116P"/>
    <property type="match status" value="1"/>
</dbReference>
<dbReference type="Pfam" id="PF00232">
    <property type="entry name" value="Glyco_hydro_1"/>
    <property type="match status" value="1"/>
</dbReference>
<dbReference type="PRINTS" id="PR00131">
    <property type="entry name" value="GLHYDRLASE1"/>
</dbReference>
<dbReference type="SUPFAM" id="SSF51445">
    <property type="entry name" value="(Trans)glycosidases"/>
    <property type="match status" value="1"/>
</dbReference>
<dbReference type="PROSITE" id="PS00572">
    <property type="entry name" value="GLYCOSYL_HYDROL_F1_1"/>
    <property type="match status" value="1"/>
</dbReference>
<dbReference type="PROSITE" id="PS00653">
    <property type="entry name" value="GLYCOSYL_HYDROL_F1_2"/>
    <property type="match status" value="1"/>
</dbReference>
<accession>Q4L868</accession>
<comment type="catalytic activity">
    <reaction evidence="1">
        <text>a 6-phospho-beta-D-galactoside + H2O = D-galactose 6-phosphate + an alcohol</text>
        <dbReference type="Rhea" id="RHEA:24568"/>
        <dbReference type="ChEBI" id="CHEBI:15377"/>
        <dbReference type="ChEBI" id="CHEBI:30879"/>
        <dbReference type="ChEBI" id="CHEBI:58534"/>
        <dbReference type="ChEBI" id="CHEBI:91004"/>
        <dbReference type="EC" id="3.2.1.85"/>
    </reaction>
</comment>
<comment type="pathway">
    <text evidence="1">Carbohydrate metabolism; lactose degradation; D-galactose 6-phosphate and beta-D-glucose from lactose 6-phosphate: step 1/1.</text>
</comment>
<comment type="similarity">
    <text evidence="1">Belongs to the glycosyl hydrolase 1 family.</text>
</comment>
<evidence type="ECO:0000255" key="1">
    <source>
        <dbReference type="HAMAP-Rule" id="MF_01574"/>
    </source>
</evidence>
<gene>
    <name evidence="1" type="primary">lacG</name>
    <name type="ordered locus">SH0848</name>
</gene>
<sequence>MKKLPEDFIFGGATAAYQAEGATQTDGKGRVAWDTYLEENYWYTAEPASDFYNKYPIDLELSEKFGVNGIRISIAWSRIFPKGYGEVNPKGVEYYHNLFKECHRRHVEPFVTLHHFDTPETLHSDGDFLNRKTIEYFVEYAKFCFEEFEEVNYWTTFNEIGPIGDGQYLVGKFPPGIKYDFAKVFQSHHNMMVAHAKAVKLFKDNGYSGEVGVVHALPTKYPYDPTNPEDVRAAELEDIIHNKFILDATYLGKYSRETMEGVQHILSVNGGKLDIPEEDYKVLEAAKDLNDFLGINYYMSDWMRGYDGESEITHNATGDKGGSKYQLKGVGQREFDVDVPRTDWDWMIYPKGLYDQIMRVVKDYPNYHKIYITENGLGYKDQFDEERKTVDDDARIDYVKKHLEVISDAIRDGANVKGYFIWSLMDVFSWSNGYEKRYGLFYVDFETQERYPKKSAYWYKELAESKEIK</sequence>
<feature type="chain" id="PRO_0000260727" description="6-phospho-beta-galactosidase">
    <location>
        <begin position="1"/>
        <end position="469"/>
    </location>
</feature>
<feature type="active site" description="Proton donor" evidence="1">
    <location>
        <position position="159"/>
    </location>
</feature>
<feature type="active site" description="Nucleophile" evidence="1">
    <location>
        <position position="374"/>
    </location>
</feature>
<feature type="binding site" evidence="1">
    <location>
        <position position="18"/>
    </location>
    <ligand>
        <name>D-galactose 6-phosphate</name>
        <dbReference type="ChEBI" id="CHEBI:91004"/>
    </ligand>
</feature>
<feature type="binding site" evidence="1">
    <location>
        <position position="115"/>
    </location>
    <ligand>
        <name>D-galactose 6-phosphate</name>
        <dbReference type="ChEBI" id="CHEBI:91004"/>
    </ligand>
</feature>
<feature type="binding site" evidence="1">
    <location>
        <position position="158"/>
    </location>
    <ligand>
        <name>D-galactose 6-phosphate</name>
        <dbReference type="ChEBI" id="CHEBI:91004"/>
    </ligand>
</feature>
<feature type="binding site" evidence="1">
    <location>
        <position position="159"/>
    </location>
    <ligand>
        <name>D-galactose 6-phosphate</name>
        <dbReference type="ChEBI" id="CHEBI:91004"/>
    </ligand>
</feature>
<feature type="binding site" evidence="1">
    <location>
        <position position="296"/>
    </location>
    <ligand>
        <name>D-galactose 6-phosphate</name>
        <dbReference type="ChEBI" id="CHEBI:91004"/>
    </ligand>
</feature>
<feature type="binding site" evidence="1">
    <location>
        <position position="429"/>
    </location>
    <ligand>
        <name>D-galactose 6-phosphate</name>
        <dbReference type="ChEBI" id="CHEBI:91004"/>
    </ligand>
</feature>
<feature type="binding site" evidence="1">
    <location>
        <position position="430"/>
    </location>
    <ligand>
        <name>D-galactose 6-phosphate</name>
        <dbReference type="ChEBI" id="CHEBI:91004"/>
    </ligand>
</feature>
<feature type="binding site" evidence="1">
    <location>
        <position position="436"/>
    </location>
    <ligand>
        <name>D-galactose 6-phosphate</name>
        <dbReference type="ChEBI" id="CHEBI:91004"/>
    </ligand>
</feature>
<feature type="binding site" evidence="1">
    <location>
        <position position="438"/>
    </location>
    <ligand>
        <name>D-galactose 6-phosphate</name>
        <dbReference type="ChEBI" id="CHEBI:91004"/>
    </ligand>
</feature>